<reference key="1">
    <citation type="submission" date="2006-06" db="EMBL/GenBank/DDBJ databases">
        <title>Complete sequence of chromosome of Mycobacterium sp. MCS.</title>
        <authorList>
            <consortium name="US DOE Joint Genome Institute"/>
            <person name="Copeland A."/>
            <person name="Lucas S."/>
            <person name="Lapidus A."/>
            <person name="Barry K."/>
            <person name="Detter J.C."/>
            <person name="Glavina del Rio T."/>
            <person name="Hammon N."/>
            <person name="Israni S."/>
            <person name="Dalin E."/>
            <person name="Tice H."/>
            <person name="Pitluck S."/>
            <person name="Martinez M."/>
            <person name="Schmutz J."/>
            <person name="Larimer F."/>
            <person name="Land M."/>
            <person name="Hauser L."/>
            <person name="Kyrpides N."/>
            <person name="Kim E."/>
            <person name="Miller C.D."/>
            <person name="Hughes J.E."/>
            <person name="Anderson A.J."/>
            <person name="Sims R.C."/>
            <person name="Richardson P."/>
        </authorList>
    </citation>
    <scope>NUCLEOTIDE SEQUENCE [LARGE SCALE GENOMIC DNA]</scope>
    <source>
        <strain>MCS</strain>
    </source>
</reference>
<feature type="chain" id="PRO_0000400278" description="Mycothiol acetyltransferase">
    <location>
        <begin position="1"/>
        <end position="300"/>
    </location>
</feature>
<feature type="domain" description="N-acetyltransferase 1" evidence="1">
    <location>
        <begin position="4"/>
        <end position="140"/>
    </location>
</feature>
<feature type="domain" description="N-acetyltransferase 2" evidence="1">
    <location>
        <begin position="151"/>
        <end position="300"/>
    </location>
</feature>
<feature type="binding site" evidence="1">
    <location>
        <position position="36"/>
    </location>
    <ligand>
        <name>1D-myo-inositol 2-(L-cysteinylamino)-2-deoxy-alpha-D-glucopyranoside</name>
        <dbReference type="ChEBI" id="CHEBI:58887"/>
    </ligand>
</feature>
<feature type="binding site" evidence="1">
    <location>
        <begin position="79"/>
        <end position="81"/>
    </location>
    <ligand>
        <name>acetyl-CoA</name>
        <dbReference type="ChEBI" id="CHEBI:57288"/>
        <label>1</label>
    </ligand>
</feature>
<feature type="binding site" evidence="1">
    <location>
        <position position="178"/>
    </location>
    <ligand>
        <name>1D-myo-inositol 2-(L-cysteinylamino)-2-deoxy-alpha-D-glucopyranoside</name>
        <dbReference type="ChEBI" id="CHEBI:58887"/>
    </ligand>
</feature>
<feature type="binding site" evidence="1">
    <location>
        <position position="219"/>
    </location>
    <ligand>
        <name>1D-myo-inositol 2-(L-cysteinylamino)-2-deoxy-alpha-D-glucopyranoside</name>
        <dbReference type="ChEBI" id="CHEBI:58887"/>
    </ligand>
</feature>
<feature type="binding site" evidence="1">
    <location>
        <position position="227"/>
    </location>
    <ligand>
        <name>1D-myo-inositol 2-(L-cysteinylamino)-2-deoxy-alpha-D-glucopyranoside</name>
        <dbReference type="ChEBI" id="CHEBI:58887"/>
    </ligand>
</feature>
<feature type="binding site" evidence="1">
    <location>
        <begin position="231"/>
        <end position="233"/>
    </location>
    <ligand>
        <name>acetyl-CoA</name>
        <dbReference type="ChEBI" id="CHEBI:57288"/>
        <label>2</label>
    </ligand>
</feature>
<feature type="binding site" evidence="1">
    <location>
        <position position="269"/>
    </location>
    <ligand>
        <name>1D-myo-inositol 2-(L-cysteinylamino)-2-deoxy-alpha-D-glucopyranoside</name>
        <dbReference type="ChEBI" id="CHEBI:58887"/>
    </ligand>
</feature>
<feature type="binding site" evidence="1">
    <location>
        <begin position="274"/>
        <end position="279"/>
    </location>
    <ligand>
        <name>acetyl-CoA</name>
        <dbReference type="ChEBI" id="CHEBI:57288"/>
        <label>2</label>
    </ligand>
</feature>
<dbReference type="EC" id="2.3.1.189" evidence="1"/>
<dbReference type="EMBL" id="CP000384">
    <property type="protein sequence ID" value="ABG10628.1"/>
    <property type="molecule type" value="Genomic_DNA"/>
</dbReference>
<dbReference type="SMR" id="Q1B3A6"/>
<dbReference type="KEGG" id="mmc:Mmcs_4524"/>
<dbReference type="HOGENOM" id="CLU_068014_0_0_11"/>
<dbReference type="BioCyc" id="MSP164756:G1G6O-4625-MONOMER"/>
<dbReference type="GO" id="GO:0035447">
    <property type="term" value="F:mycothiol synthase activity"/>
    <property type="evidence" value="ECO:0007669"/>
    <property type="project" value="UniProtKB-UniRule"/>
</dbReference>
<dbReference type="GO" id="GO:0008999">
    <property type="term" value="F:protein-N-terminal-alanine acetyltransferase activity"/>
    <property type="evidence" value="ECO:0007669"/>
    <property type="project" value="TreeGrafter"/>
</dbReference>
<dbReference type="GO" id="GO:0010125">
    <property type="term" value="P:mycothiol biosynthetic process"/>
    <property type="evidence" value="ECO:0007669"/>
    <property type="project" value="UniProtKB-UniRule"/>
</dbReference>
<dbReference type="CDD" id="cd04301">
    <property type="entry name" value="NAT_SF"/>
    <property type="match status" value="2"/>
</dbReference>
<dbReference type="Gene3D" id="3.40.630.30">
    <property type="match status" value="1"/>
</dbReference>
<dbReference type="HAMAP" id="MF_01698">
    <property type="entry name" value="MshD"/>
    <property type="match status" value="1"/>
</dbReference>
<dbReference type="InterPro" id="IPR016181">
    <property type="entry name" value="Acyl_CoA_acyltransferase"/>
</dbReference>
<dbReference type="InterPro" id="IPR000182">
    <property type="entry name" value="GNAT_dom"/>
</dbReference>
<dbReference type="InterPro" id="IPR050276">
    <property type="entry name" value="MshD_Acetyltransferase"/>
</dbReference>
<dbReference type="InterPro" id="IPR017813">
    <property type="entry name" value="Mycothiol_AcTrfase"/>
</dbReference>
<dbReference type="NCBIfam" id="TIGR03448">
    <property type="entry name" value="mycothiol_MshD"/>
    <property type="match status" value="1"/>
</dbReference>
<dbReference type="PANTHER" id="PTHR43617">
    <property type="entry name" value="L-AMINO ACID N-ACETYLTRANSFERASE"/>
    <property type="match status" value="1"/>
</dbReference>
<dbReference type="PANTHER" id="PTHR43617:SF31">
    <property type="entry name" value="MYCOTHIOL ACETYLTRANSFERASE"/>
    <property type="match status" value="1"/>
</dbReference>
<dbReference type="Pfam" id="PF00583">
    <property type="entry name" value="Acetyltransf_1"/>
    <property type="match status" value="2"/>
</dbReference>
<dbReference type="PIRSF" id="PIRSF021524">
    <property type="entry name" value="MSH_acetyltransferase"/>
    <property type="match status" value="1"/>
</dbReference>
<dbReference type="SUPFAM" id="SSF55729">
    <property type="entry name" value="Acyl-CoA N-acyltransferases (Nat)"/>
    <property type="match status" value="1"/>
</dbReference>
<dbReference type="PROSITE" id="PS51186">
    <property type="entry name" value="GNAT"/>
    <property type="match status" value="2"/>
</dbReference>
<proteinExistence type="inferred from homology"/>
<protein>
    <recommendedName>
        <fullName evidence="1">Mycothiol acetyltransferase</fullName>
        <shortName evidence="1">MSH acetyltransferase</shortName>
        <ecNumber evidence="1">2.3.1.189</ecNumber>
    </recommendedName>
    <alternativeName>
        <fullName evidence="1">Mycothiol synthase</fullName>
    </alternativeName>
</protein>
<organism>
    <name type="scientific">Mycobacterium sp. (strain MCS)</name>
    <dbReference type="NCBI Taxonomy" id="164756"/>
    <lineage>
        <taxon>Bacteria</taxon>
        <taxon>Bacillati</taxon>
        <taxon>Actinomycetota</taxon>
        <taxon>Actinomycetes</taxon>
        <taxon>Mycobacteriales</taxon>
        <taxon>Mycobacteriaceae</taxon>
        <taxon>Mycobacterium</taxon>
    </lineage>
</organism>
<accession>Q1B3A6</accession>
<keyword id="KW-0012">Acyltransferase</keyword>
<keyword id="KW-0677">Repeat</keyword>
<keyword id="KW-0808">Transferase</keyword>
<sequence>MTSIDWRSALTDDEQGSIRDIVAAATRHDGVAPVGDQVLRELPADRTRHLVAVDPDAGAVVGYLNLAPASDTAPPMAELVVHPDFRRRGTGAAMARAGLAEGGTHARIWAHGNLEAARATARTLGLQVVRELLQMRRPLTDLPPVTVADGVRLATYSGPGDDPELLRINNSAFAWHPEQGGWTDADIAERRAEAWFDPAGLFMAFDDASGKLLGFHWTKVHGPDLGEVYVVGVDPAAQGRGLGATLTLTGLHHLAERLSNSPQPTVMLYVEADNGAAVKTYRRLGFDVSSVDAAYAAVAD</sequence>
<name>MSHD_MYCSS</name>
<comment type="function">
    <text evidence="1">Catalyzes the transfer of acetyl from acetyl-CoA to desacetylmycothiol (Cys-GlcN-Ins) to form mycothiol.</text>
</comment>
<comment type="catalytic activity">
    <reaction evidence="1">
        <text>1D-myo-inositol 2-(L-cysteinylamino)-2-deoxy-alpha-D-glucopyranoside + acetyl-CoA = mycothiol + CoA + H(+)</text>
        <dbReference type="Rhea" id="RHEA:26172"/>
        <dbReference type="ChEBI" id="CHEBI:15378"/>
        <dbReference type="ChEBI" id="CHEBI:16768"/>
        <dbReference type="ChEBI" id="CHEBI:57287"/>
        <dbReference type="ChEBI" id="CHEBI:57288"/>
        <dbReference type="ChEBI" id="CHEBI:58887"/>
        <dbReference type="EC" id="2.3.1.189"/>
    </reaction>
</comment>
<comment type="subunit">
    <text evidence="1">Monomer.</text>
</comment>
<comment type="similarity">
    <text evidence="1">Belongs to the acetyltransferase family. MshD subfamily.</text>
</comment>
<evidence type="ECO:0000255" key="1">
    <source>
        <dbReference type="HAMAP-Rule" id="MF_01698"/>
    </source>
</evidence>
<gene>
    <name evidence="1" type="primary">mshD</name>
    <name type="ordered locus">Mmcs_4524</name>
</gene>